<comment type="function">
    <text evidence="1">Is required not only for elongation of protein synthesis but also for the initiation of all mRNA translation through initiator tRNA(fMet) aminoacylation.</text>
</comment>
<comment type="catalytic activity">
    <reaction evidence="1">
        <text>tRNA(Met) + L-methionine + ATP = L-methionyl-tRNA(Met) + AMP + diphosphate</text>
        <dbReference type="Rhea" id="RHEA:13481"/>
        <dbReference type="Rhea" id="RHEA-COMP:9667"/>
        <dbReference type="Rhea" id="RHEA-COMP:9698"/>
        <dbReference type="ChEBI" id="CHEBI:30616"/>
        <dbReference type="ChEBI" id="CHEBI:33019"/>
        <dbReference type="ChEBI" id="CHEBI:57844"/>
        <dbReference type="ChEBI" id="CHEBI:78442"/>
        <dbReference type="ChEBI" id="CHEBI:78530"/>
        <dbReference type="ChEBI" id="CHEBI:456215"/>
        <dbReference type="EC" id="6.1.1.10"/>
    </reaction>
</comment>
<comment type="subunit">
    <text evidence="1">Homodimer.</text>
</comment>
<comment type="subcellular location">
    <subcellularLocation>
        <location evidence="1">Cytoplasm</location>
    </subcellularLocation>
</comment>
<comment type="similarity">
    <text evidence="1">Belongs to the class-I aminoacyl-tRNA synthetase family. MetG type 2B subfamily.</text>
</comment>
<evidence type="ECO:0000255" key="1">
    <source>
        <dbReference type="HAMAP-Rule" id="MF_01228"/>
    </source>
</evidence>
<keyword id="KW-0030">Aminoacyl-tRNA synthetase</keyword>
<keyword id="KW-0067">ATP-binding</keyword>
<keyword id="KW-0963">Cytoplasm</keyword>
<keyword id="KW-0436">Ligase</keyword>
<keyword id="KW-0547">Nucleotide-binding</keyword>
<keyword id="KW-0648">Protein biosynthesis</keyword>
<keyword id="KW-1185">Reference proteome</keyword>
<keyword id="KW-0694">RNA-binding</keyword>
<keyword id="KW-0820">tRNA-binding</keyword>
<name>SYM1_BACAN</name>
<accession>Q81W03</accession>
<accession>Q6I506</accession>
<accession>Q6KYQ0</accession>
<organism>
    <name type="scientific">Bacillus anthracis</name>
    <dbReference type="NCBI Taxonomy" id="1392"/>
    <lineage>
        <taxon>Bacteria</taxon>
        <taxon>Bacillati</taxon>
        <taxon>Bacillota</taxon>
        <taxon>Bacilli</taxon>
        <taxon>Bacillales</taxon>
        <taxon>Bacillaceae</taxon>
        <taxon>Bacillus</taxon>
        <taxon>Bacillus cereus group</taxon>
    </lineage>
</organism>
<proteinExistence type="inferred from homology"/>
<reference key="1">
    <citation type="journal article" date="2003" name="Nature">
        <title>The genome sequence of Bacillus anthracis Ames and comparison to closely related bacteria.</title>
        <authorList>
            <person name="Read T.D."/>
            <person name="Peterson S.N."/>
            <person name="Tourasse N.J."/>
            <person name="Baillie L.W."/>
            <person name="Paulsen I.T."/>
            <person name="Nelson K.E."/>
            <person name="Tettelin H."/>
            <person name="Fouts D.E."/>
            <person name="Eisen J.A."/>
            <person name="Gill S.R."/>
            <person name="Holtzapple E.K."/>
            <person name="Okstad O.A."/>
            <person name="Helgason E."/>
            <person name="Rilstone J."/>
            <person name="Wu M."/>
            <person name="Kolonay J.F."/>
            <person name="Beanan M.J."/>
            <person name="Dodson R.J."/>
            <person name="Brinkac L.M."/>
            <person name="Gwinn M.L."/>
            <person name="DeBoy R.T."/>
            <person name="Madpu R."/>
            <person name="Daugherty S.C."/>
            <person name="Durkin A.S."/>
            <person name="Haft D.H."/>
            <person name="Nelson W.C."/>
            <person name="Peterson J.D."/>
            <person name="Pop M."/>
            <person name="Khouri H.M."/>
            <person name="Radune D."/>
            <person name="Benton J.L."/>
            <person name="Mahamoud Y."/>
            <person name="Jiang L."/>
            <person name="Hance I.R."/>
            <person name="Weidman J.F."/>
            <person name="Berry K.J."/>
            <person name="Plaut R.D."/>
            <person name="Wolf A.M."/>
            <person name="Watkins K.L."/>
            <person name="Nierman W.C."/>
            <person name="Hazen A."/>
            <person name="Cline R.T."/>
            <person name="Redmond C."/>
            <person name="Thwaite J.E."/>
            <person name="White O."/>
            <person name="Salzberg S.L."/>
            <person name="Thomason B."/>
            <person name="Friedlander A.M."/>
            <person name="Koehler T.M."/>
            <person name="Hanna P.C."/>
            <person name="Kolstoe A.-B."/>
            <person name="Fraser C.M."/>
        </authorList>
    </citation>
    <scope>NUCLEOTIDE SEQUENCE [LARGE SCALE GENOMIC DNA]</scope>
    <source>
        <strain>Ames / isolate Porton</strain>
    </source>
</reference>
<reference key="2">
    <citation type="journal article" date="2009" name="J. Bacteriol.">
        <title>The complete genome sequence of Bacillus anthracis Ames 'Ancestor'.</title>
        <authorList>
            <person name="Ravel J."/>
            <person name="Jiang L."/>
            <person name="Stanley S.T."/>
            <person name="Wilson M.R."/>
            <person name="Decker R.S."/>
            <person name="Read T.D."/>
            <person name="Worsham P."/>
            <person name="Keim P.S."/>
            <person name="Salzberg S.L."/>
            <person name="Fraser-Liggett C.M."/>
            <person name="Rasko D.A."/>
        </authorList>
    </citation>
    <scope>NUCLEOTIDE SEQUENCE [LARGE SCALE GENOMIC DNA]</scope>
    <source>
        <strain>Ames ancestor</strain>
    </source>
</reference>
<reference key="3">
    <citation type="submission" date="2004-01" db="EMBL/GenBank/DDBJ databases">
        <title>Complete genome sequence of Bacillus anthracis Sterne.</title>
        <authorList>
            <person name="Brettin T.S."/>
            <person name="Bruce D."/>
            <person name="Challacombe J.F."/>
            <person name="Gilna P."/>
            <person name="Han C."/>
            <person name="Hill K."/>
            <person name="Hitchcock P."/>
            <person name="Jackson P."/>
            <person name="Keim P."/>
            <person name="Longmire J."/>
            <person name="Lucas S."/>
            <person name="Okinaka R."/>
            <person name="Richardson P."/>
            <person name="Rubin E."/>
            <person name="Tice H."/>
        </authorList>
    </citation>
    <scope>NUCLEOTIDE SEQUENCE [LARGE SCALE GENOMIC DNA]</scope>
    <source>
        <strain>Sterne</strain>
    </source>
</reference>
<gene>
    <name evidence="1" type="primary">metG1</name>
    <name type="synonym">metG</name>
    <name type="synonym">metS</name>
    <name type="ordered locus">BA_0036</name>
    <name type="ordered locus">GBAA_0036</name>
    <name type="ordered locus">BAS0037</name>
</gene>
<sequence>MTEENKSFYITTPIYYPSGKLHIGHAYTTVAGDAMARYKCMQGYNVHYLTGTDEHGQKIQKKAEELNVTPQAYVDNIVAGIKELWEKMDISYDDFIRTTEDRHKDVVEKIFKQLVDQGDIYLDEYEGWYSVQDETFYTEHQLVDPIMEGDKVVGGKSPDSGHDVELVREESYFFRMGKYVDRLLKFYEDNPHFIQPESRKNEMINNFIKPGLEDLAVSRTSFDWGVRVPGNPKHVIYVWVDALSNYITALGYGTENEEMYKKFWPADVHLVGKEIVRFHTIYWPIILMALDLPLPKKVFAHGWILMKDGKMSKSKGNVVDPVILIDRYGLDALRYYLLREVPFGSDGVFTPEGFVERINFDLANDLGNLLNRTVAMIDKYFNGEIPAFKANVTEFDETLVTFAKDTLKKVEEAMENMEFSVALSSIWQLVSRTNKYIDETQPWVLAKDEDDREKLASVMAHLAEVLRQTGIMLMPFLTVAPSKMFAQLGLTDEAHTSWGSLSTIGCIPAGTKVEKGQPIFPRLEMDVEVAYIKEQMKASAPKVEEKKEEEPKAEEITIDDFFKVELRVAEVLSAEPVKKADKLLKIQLDLGTEKRQVVSGIAKFYSPEDLKGKKVICVTNLKPVKLRGELSQGMILAGEENGVLSLASIDQNIPNGTKIK</sequence>
<dbReference type="EC" id="6.1.1.10" evidence="1"/>
<dbReference type="EMBL" id="AE016879">
    <property type="protein sequence ID" value="AAP24091.1"/>
    <property type="molecule type" value="Genomic_DNA"/>
</dbReference>
<dbReference type="EMBL" id="AE017334">
    <property type="protein sequence ID" value="AAT29115.2"/>
    <property type="molecule type" value="Genomic_DNA"/>
</dbReference>
<dbReference type="EMBL" id="AE017225">
    <property type="protein sequence ID" value="AAT52375.1"/>
    <property type="molecule type" value="Genomic_DNA"/>
</dbReference>
<dbReference type="RefSeq" id="NP_842605.1">
    <property type="nucleotide sequence ID" value="NC_003997.3"/>
</dbReference>
<dbReference type="RefSeq" id="WP_000134128.1">
    <property type="nucleotide sequence ID" value="NZ_VTZL01000011.1"/>
</dbReference>
<dbReference type="RefSeq" id="YP_026324.1">
    <property type="nucleotide sequence ID" value="NC_005945.1"/>
</dbReference>
<dbReference type="SMR" id="Q81W03"/>
<dbReference type="IntAct" id="Q81W03">
    <property type="interactions" value="5"/>
</dbReference>
<dbReference type="STRING" id="261594.GBAA_0036"/>
<dbReference type="DNASU" id="1084885"/>
<dbReference type="KEGG" id="ban:BA_0036"/>
<dbReference type="KEGG" id="bar:GBAA_0036"/>
<dbReference type="KEGG" id="bat:BAS0037"/>
<dbReference type="PATRIC" id="fig|198094.11.peg.34"/>
<dbReference type="eggNOG" id="COG0073">
    <property type="taxonomic scope" value="Bacteria"/>
</dbReference>
<dbReference type="eggNOG" id="COG0143">
    <property type="taxonomic scope" value="Bacteria"/>
</dbReference>
<dbReference type="HOGENOM" id="CLU_009710_9_4_9"/>
<dbReference type="OMA" id="NMFLPDR"/>
<dbReference type="Proteomes" id="UP000000427">
    <property type="component" value="Chromosome"/>
</dbReference>
<dbReference type="Proteomes" id="UP000000594">
    <property type="component" value="Chromosome"/>
</dbReference>
<dbReference type="GO" id="GO:0005737">
    <property type="term" value="C:cytoplasm"/>
    <property type="evidence" value="ECO:0007669"/>
    <property type="project" value="UniProtKB-SubCell"/>
</dbReference>
<dbReference type="GO" id="GO:0005524">
    <property type="term" value="F:ATP binding"/>
    <property type="evidence" value="ECO:0007669"/>
    <property type="project" value="UniProtKB-UniRule"/>
</dbReference>
<dbReference type="GO" id="GO:0004825">
    <property type="term" value="F:methionine-tRNA ligase activity"/>
    <property type="evidence" value="ECO:0007669"/>
    <property type="project" value="UniProtKB-UniRule"/>
</dbReference>
<dbReference type="GO" id="GO:0000049">
    <property type="term" value="F:tRNA binding"/>
    <property type="evidence" value="ECO:0007669"/>
    <property type="project" value="UniProtKB-KW"/>
</dbReference>
<dbReference type="GO" id="GO:0006431">
    <property type="term" value="P:methionyl-tRNA aminoacylation"/>
    <property type="evidence" value="ECO:0007669"/>
    <property type="project" value="UniProtKB-UniRule"/>
</dbReference>
<dbReference type="CDD" id="cd07957">
    <property type="entry name" value="Anticodon_Ia_Met"/>
    <property type="match status" value="1"/>
</dbReference>
<dbReference type="CDD" id="cd00814">
    <property type="entry name" value="MetRS_core"/>
    <property type="match status" value="1"/>
</dbReference>
<dbReference type="CDD" id="cd02800">
    <property type="entry name" value="tRNA_bind_EcMetRS_like"/>
    <property type="match status" value="1"/>
</dbReference>
<dbReference type="FunFam" id="1.10.730.10:FF:000026">
    <property type="entry name" value="Methionine--tRNA ligase"/>
    <property type="match status" value="1"/>
</dbReference>
<dbReference type="FunFam" id="2.170.220.10:FF:000002">
    <property type="entry name" value="Methionine--tRNA ligase"/>
    <property type="match status" value="1"/>
</dbReference>
<dbReference type="FunFam" id="2.40.50.140:FF:000042">
    <property type="entry name" value="Methionine--tRNA ligase"/>
    <property type="match status" value="1"/>
</dbReference>
<dbReference type="Gene3D" id="2.170.220.10">
    <property type="match status" value="1"/>
</dbReference>
<dbReference type="Gene3D" id="3.40.50.620">
    <property type="entry name" value="HUPs"/>
    <property type="match status" value="1"/>
</dbReference>
<dbReference type="Gene3D" id="1.10.730.10">
    <property type="entry name" value="Isoleucyl-tRNA Synthetase, Domain 1"/>
    <property type="match status" value="1"/>
</dbReference>
<dbReference type="Gene3D" id="2.40.50.140">
    <property type="entry name" value="Nucleic acid-binding proteins"/>
    <property type="match status" value="1"/>
</dbReference>
<dbReference type="HAMAP" id="MF_01228">
    <property type="entry name" value="Met_tRNA_synth_type2"/>
    <property type="match status" value="1"/>
</dbReference>
<dbReference type="InterPro" id="IPR001412">
    <property type="entry name" value="aa-tRNA-synth_I_CS"/>
</dbReference>
<dbReference type="InterPro" id="IPR041872">
    <property type="entry name" value="Anticodon_Met"/>
</dbReference>
<dbReference type="InterPro" id="IPR004495">
    <property type="entry name" value="Met-tRNA-synth_bsu_C"/>
</dbReference>
<dbReference type="InterPro" id="IPR014758">
    <property type="entry name" value="Met-tRNA_synth"/>
</dbReference>
<dbReference type="InterPro" id="IPR023457">
    <property type="entry name" value="Met-tRNA_synth_2"/>
</dbReference>
<dbReference type="InterPro" id="IPR015413">
    <property type="entry name" value="Methionyl/Leucyl_tRNA_Synth"/>
</dbReference>
<dbReference type="InterPro" id="IPR033911">
    <property type="entry name" value="MetRS_core"/>
</dbReference>
<dbReference type="InterPro" id="IPR012340">
    <property type="entry name" value="NA-bd_OB-fold"/>
</dbReference>
<dbReference type="InterPro" id="IPR014729">
    <property type="entry name" value="Rossmann-like_a/b/a_fold"/>
</dbReference>
<dbReference type="InterPro" id="IPR002547">
    <property type="entry name" value="tRNA-bd_dom"/>
</dbReference>
<dbReference type="InterPro" id="IPR009080">
    <property type="entry name" value="tRNAsynth_Ia_anticodon-bd"/>
</dbReference>
<dbReference type="NCBIfam" id="TIGR00398">
    <property type="entry name" value="metG"/>
    <property type="match status" value="1"/>
</dbReference>
<dbReference type="NCBIfam" id="TIGR00399">
    <property type="entry name" value="metG_C_term"/>
    <property type="match status" value="1"/>
</dbReference>
<dbReference type="NCBIfam" id="NF008900">
    <property type="entry name" value="PRK12267.1"/>
    <property type="match status" value="1"/>
</dbReference>
<dbReference type="PANTHER" id="PTHR43326:SF1">
    <property type="entry name" value="METHIONINE--TRNA LIGASE, MITOCHONDRIAL"/>
    <property type="match status" value="1"/>
</dbReference>
<dbReference type="PANTHER" id="PTHR43326">
    <property type="entry name" value="METHIONYL-TRNA SYNTHETASE"/>
    <property type="match status" value="1"/>
</dbReference>
<dbReference type="Pfam" id="PF19303">
    <property type="entry name" value="Anticodon_3"/>
    <property type="match status" value="1"/>
</dbReference>
<dbReference type="Pfam" id="PF09334">
    <property type="entry name" value="tRNA-synt_1g"/>
    <property type="match status" value="1"/>
</dbReference>
<dbReference type="Pfam" id="PF01588">
    <property type="entry name" value="tRNA_bind"/>
    <property type="match status" value="1"/>
</dbReference>
<dbReference type="PRINTS" id="PR01041">
    <property type="entry name" value="TRNASYNTHMET"/>
</dbReference>
<dbReference type="SUPFAM" id="SSF47323">
    <property type="entry name" value="Anticodon-binding domain of a subclass of class I aminoacyl-tRNA synthetases"/>
    <property type="match status" value="1"/>
</dbReference>
<dbReference type="SUPFAM" id="SSF50249">
    <property type="entry name" value="Nucleic acid-binding proteins"/>
    <property type="match status" value="1"/>
</dbReference>
<dbReference type="SUPFAM" id="SSF52374">
    <property type="entry name" value="Nucleotidylyl transferase"/>
    <property type="match status" value="1"/>
</dbReference>
<dbReference type="PROSITE" id="PS00178">
    <property type="entry name" value="AA_TRNA_LIGASE_I"/>
    <property type="match status" value="1"/>
</dbReference>
<dbReference type="PROSITE" id="PS50886">
    <property type="entry name" value="TRBD"/>
    <property type="match status" value="1"/>
</dbReference>
<protein>
    <recommendedName>
        <fullName evidence="1">Methionine--tRNA ligase 1</fullName>
        <ecNumber evidence="1">6.1.1.10</ecNumber>
    </recommendedName>
    <alternativeName>
        <fullName evidence="1">Methionyl-tRNA synthetase 1</fullName>
        <shortName evidence="1">MetRS 1</shortName>
    </alternativeName>
</protein>
<feature type="chain" id="PRO_0000139207" description="Methionine--tRNA ligase 1">
    <location>
        <begin position="1"/>
        <end position="660"/>
    </location>
</feature>
<feature type="domain" description="tRNA-binding" evidence="1">
    <location>
        <begin position="560"/>
        <end position="660"/>
    </location>
</feature>
<feature type="short sequence motif" description="'HIGH' region">
    <location>
        <begin position="15"/>
        <end position="25"/>
    </location>
</feature>
<feature type="short sequence motif" description="'KMSKS' region">
    <location>
        <begin position="310"/>
        <end position="314"/>
    </location>
</feature>
<feature type="binding site" evidence="1">
    <location>
        <position position="313"/>
    </location>
    <ligand>
        <name>ATP</name>
        <dbReference type="ChEBI" id="CHEBI:30616"/>
    </ligand>
</feature>